<proteinExistence type="inferred from homology"/>
<keyword id="KW-0030">Aminoacyl-tRNA synthetase</keyword>
<keyword id="KW-0067">ATP-binding</keyword>
<keyword id="KW-0963">Cytoplasm</keyword>
<keyword id="KW-0436">Ligase</keyword>
<keyword id="KW-0547">Nucleotide-binding</keyword>
<keyword id="KW-0648">Protein biosynthesis</keyword>
<keyword id="KW-1185">Reference proteome</keyword>
<organism>
    <name type="scientific">Nitrobacter winogradskyi (strain ATCC 25391 / DSM 10237 / CIP 104748 / NCIMB 11846 / Nb-255)</name>
    <dbReference type="NCBI Taxonomy" id="323098"/>
    <lineage>
        <taxon>Bacteria</taxon>
        <taxon>Pseudomonadati</taxon>
        <taxon>Pseudomonadota</taxon>
        <taxon>Alphaproteobacteria</taxon>
        <taxon>Hyphomicrobiales</taxon>
        <taxon>Nitrobacteraceae</taxon>
        <taxon>Nitrobacter</taxon>
    </lineage>
</organism>
<protein>
    <recommendedName>
        <fullName evidence="1">Arginine--tRNA ligase</fullName>
        <ecNumber evidence="1">6.1.1.19</ecNumber>
    </recommendedName>
    <alternativeName>
        <fullName evidence="1">Arginyl-tRNA synthetase</fullName>
        <shortName evidence="1">ArgRS</shortName>
    </alternativeName>
</protein>
<dbReference type="EC" id="6.1.1.19" evidence="1"/>
<dbReference type="EMBL" id="CP000115">
    <property type="protein sequence ID" value="ABA05068.1"/>
    <property type="molecule type" value="Genomic_DNA"/>
</dbReference>
<dbReference type="RefSeq" id="WP_011315064.1">
    <property type="nucleotide sequence ID" value="NC_007406.1"/>
</dbReference>
<dbReference type="SMR" id="Q3SRM3"/>
<dbReference type="STRING" id="323098.Nwi_1807"/>
<dbReference type="KEGG" id="nwi:Nwi_1807"/>
<dbReference type="eggNOG" id="COG0018">
    <property type="taxonomic scope" value="Bacteria"/>
</dbReference>
<dbReference type="HOGENOM" id="CLU_006406_0_1_5"/>
<dbReference type="OrthoDB" id="9803211at2"/>
<dbReference type="Proteomes" id="UP000002531">
    <property type="component" value="Chromosome"/>
</dbReference>
<dbReference type="GO" id="GO:0005737">
    <property type="term" value="C:cytoplasm"/>
    <property type="evidence" value="ECO:0007669"/>
    <property type="project" value="UniProtKB-SubCell"/>
</dbReference>
<dbReference type="GO" id="GO:0004814">
    <property type="term" value="F:arginine-tRNA ligase activity"/>
    <property type="evidence" value="ECO:0007669"/>
    <property type="project" value="UniProtKB-UniRule"/>
</dbReference>
<dbReference type="GO" id="GO:0005524">
    <property type="term" value="F:ATP binding"/>
    <property type="evidence" value="ECO:0007669"/>
    <property type="project" value="UniProtKB-UniRule"/>
</dbReference>
<dbReference type="GO" id="GO:0006420">
    <property type="term" value="P:arginyl-tRNA aminoacylation"/>
    <property type="evidence" value="ECO:0007669"/>
    <property type="project" value="UniProtKB-UniRule"/>
</dbReference>
<dbReference type="CDD" id="cd00671">
    <property type="entry name" value="ArgRS_core"/>
    <property type="match status" value="1"/>
</dbReference>
<dbReference type="FunFam" id="1.10.730.10:FF:000008">
    <property type="entry name" value="Arginine--tRNA ligase"/>
    <property type="match status" value="1"/>
</dbReference>
<dbReference type="FunFam" id="3.40.50.620:FF:000062">
    <property type="entry name" value="Arginine--tRNA ligase"/>
    <property type="match status" value="1"/>
</dbReference>
<dbReference type="Gene3D" id="3.30.1360.70">
    <property type="entry name" value="Arginyl tRNA synthetase N-terminal domain"/>
    <property type="match status" value="1"/>
</dbReference>
<dbReference type="Gene3D" id="3.40.50.620">
    <property type="entry name" value="HUPs"/>
    <property type="match status" value="1"/>
</dbReference>
<dbReference type="Gene3D" id="1.10.730.10">
    <property type="entry name" value="Isoleucyl-tRNA Synthetase, Domain 1"/>
    <property type="match status" value="1"/>
</dbReference>
<dbReference type="HAMAP" id="MF_00123">
    <property type="entry name" value="Arg_tRNA_synth"/>
    <property type="match status" value="1"/>
</dbReference>
<dbReference type="InterPro" id="IPR001412">
    <property type="entry name" value="aa-tRNA-synth_I_CS"/>
</dbReference>
<dbReference type="InterPro" id="IPR001278">
    <property type="entry name" value="Arg-tRNA-ligase"/>
</dbReference>
<dbReference type="InterPro" id="IPR005148">
    <property type="entry name" value="Arg-tRNA-synth_N"/>
</dbReference>
<dbReference type="InterPro" id="IPR036695">
    <property type="entry name" value="Arg-tRNA-synth_N_sf"/>
</dbReference>
<dbReference type="InterPro" id="IPR035684">
    <property type="entry name" value="ArgRS_core"/>
</dbReference>
<dbReference type="InterPro" id="IPR008909">
    <property type="entry name" value="DALR_anticod-bd"/>
</dbReference>
<dbReference type="InterPro" id="IPR014729">
    <property type="entry name" value="Rossmann-like_a/b/a_fold"/>
</dbReference>
<dbReference type="InterPro" id="IPR009080">
    <property type="entry name" value="tRNAsynth_Ia_anticodon-bd"/>
</dbReference>
<dbReference type="NCBIfam" id="TIGR00456">
    <property type="entry name" value="argS"/>
    <property type="match status" value="1"/>
</dbReference>
<dbReference type="PANTHER" id="PTHR11956:SF5">
    <property type="entry name" value="ARGININE--TRNA LIGASE, CYTOPLASMIC"/>
    <property type="match status" value="1"/>
</dbReference>
<dbReference type="PANTHER" id="PTHR11956">
    <property type="entry name" value="ARGINYL-TRNA SYNTHETASE"/>
    <property type="match status" value="1"/>
</dbReference>
<dbReference type="Pfam" id="PF03485">
    <property type="entry name" value="Arg_tRNA_synt_N"/>
    <property type="match status" value="1"/>
</dbReference>
<dbReference type="Pfam" id="PF05746">
    <property type="entry name" value="DALR_1"/>
    <property type="match status" value="1"/>
</dbReference>
<dbReference type="Pfam" id="PF00750">
    <property type="entry name" value="tRNA-synt_1d"/>
    <property type="match status" value="2"/>
</dbReference>
<dbReference type="PRINTS" id="PR01038">
    <property type="entry name" value="TRNASYNTHARG"/>
</dbReference>
<dbReference type="SMART" id="SM01016">
    <property type="entry name" value="Arg_tRNA_synt_N"/>
    <property type="match status" value="1"/>
</dbReference>
<dbReference type="SMART" id="SM00836">
    <property type="entry name" value="DALR_1"/>
    <property type="match status" value="1"/>
</dbReference>
<dbReference type="SUPFAM" id="SSF47323">
    <property type="entry name" value="Anticodon-binding domain of a subclass of class I aminoacyl-tRNA synthetases"/>
    <property type="match status" value="1"/>
</dbReference>
<dbReference type="SUPFAM" id="SSF55190">
    <property type="entry name" value="Arginyl-tRNA synthetase (ArgRS), N-terminal 'additional' domain"/>
    <property type="match status" value="1"/>
</dbReference>
<dbReference type="SUPFAM" id="SSF52374">
    <property type="entry name" value="Nucleotidylyl transferase"/>
    <property type="match status" value="1"/>
</dbReference>
<dbReference type="PROSITE" id="PS00178">
    <property type="entry name" value="AA_TRNA_LIGASE_I"/>
    <property type="match status" value="1"/>
</dbReference>
<comment type="catalytic activity">
    <reaction evidence="1">
        <text>tRNA(Arg) + L-arginine + ATP = L-arginyl-tRNA(Arg) + AMP + diphosphate</text>
        <dbReference type="Rhea" id="RHEA:20301"/>
        <dbReference type="Rhea" id="RHEA-COMP:9658"/>
        <dbReference type="Rhea" id="RHEA-COMP:9673"/>
        <dbReference type="ChEBI" id="CHEBI:30616"/>
        <dbReference type="ChEBI" id="CHEBI:32682"/>
        <dbReference type="ChEBI" id="CHEBI:33019"/>
        <dbReference type="ChEBI" id="CHEBI:78442"/>
        <dbReference type="ChEBI" id="CHEBI:78513"/>
        <dbReference type="ChEBI" id="CHEBI:456215"/>
        <dbReference type="EC" id="6.1.1.19"/>
    </reaction>
</comment>
<comment type="subunit">
    <text evidence="1">Monomer.</text>
</comment>
<comment type="subcellular location">
    <subcellularLocation>
        <location evidence="1">Cytoplasm</location>
    </subcellularLocation>
</comment>
<comment type="similarity">
    <text evidence="1">Belongs to the class-I aminoacyl-tRNA synthetase family.</text>
</comment>
<name>SYR_NITWN</name>
<gene>
    <name evidence="1" type="primary">argS</name>
    <name type="ordered locus">Nwi_1807</name>
</gene>
<sequence>MTDSSPSQHLFADVLARVHRACAALAEEGALPSGLDLARIVVEPPRDASHGDMATNAAMVLAKDAKAKPRDLAERIVTKLRADDLIESADIAGPGFINLTLKLPVWADVLRDVLRDGEGYGRSAIGAGEKVNVEYVSANPTGPMHVGHCRGAVFGDALASLLSFAGYDVTREYYINDAGSQVDVLARSAFLRYREALGEDIGEIPDGLYPGDYLKPVGQALAAGHGDSLVKAPEAEWLGLVRAKAIGMMMEMIRGDLAALNIRHDVFFSERSLIDGSADRVAETIGFLREKGDVYEGRLPPPKGAPVEDYEDREQTLFRATAYGDDVDRPLKKSDGGYTYFASDIAYHKTKFDRGFHNMVDVWGADHGGYIKRVQAAIKAVTSGKGTLDVKIVQLVKLLRNGEPVKMSKRAGDFVTLREVVEEVGSDAVRFMMLFRKNDAVLDFDLARVIEQSKDNPVFYVQYGHARGFSIFRNAREVFPDLPEADAERRQFLGTADLERLSDPAELGLLRKLALYPRTVEAAAAAHEPHRIAFYLYDLASEFHALWTKGRDLPHLRFIINNDAQITRARLALVQGVVAVLASGLTVLGVHAPTEMR</sequence>
<evidence type="ECO:0000255" key="1">
    <source>
        <dbReference type="HAMAP-Rule" id="MF_00123"/>
    </source>
</evidence>
<feature type="chain" id="PRO_0000242055" description="Arginine--tRNA ligase">
    <location>
        <begin position="1"/>
        <end position="597"/>
    </location>
</feature>
<feature type="short sequence motif" description="'HIGH' region">
    <location>
        <begin position="138"/>
        <end position="148"/>
    </location>
</feature>
<reference key="1">
    <citation type="journal article" date="2006" name="Appl. Environ. Microbiol.">
        <title>Genome sequence of the chemolithoautotrophic nitrite-oxidizing bacterium Nitrobacter winogradskyi Nb-255.</title>
        <authorList>
            <person name="Starkenburg S.R."/>
            <person name="Chain P.S.G."/>
            <person name="Sayavedra-Soto L.A."/>
            <person name="Hauser L."/>
            <person name="Land M.L."/>
            <person name="Larimer F.W."/>
            <person name="Malfatti S.A."/>
            <person name="Klotz M.G."/>
            <person name="Bottomley P.J."/>
            <person name="Arp D.J."/>
            <person name="Hickey W.J."/>
        </authorList>
    </citation>
    <scope>NUCLEOTIDE SEQUENCE [LARGE SCALE GENOMIC DNA]</scope>
    <source>
        <strain>ATCC 25391 / DSM 10237 / CIP 104748 / NCIMB 11846 / Nb-255</strain>
    </source>
</reference>
<accession>Q3SRM3</accession>